<accession>I1RZZ3</accession>
<gene>
    <name evidence="6" type="primary">ERG4</name>
    <name type="ORF">FGRAMPH1_01T07045</name>
</gene>
<evidence type="ECO:0000250" key="1">
    <source>
        <dbReference type="UniProtKB" id="G4SW86"/>
    </source>
</evidence>
<evidence type="ECO:0000255" key="2"/>
<evidence type="ECO:0000256" key="3">
    <source>
        <dbReference type="SAM" id="MobiDB-lite"/>
    </source>
</evidence>
<evidence type="ECO:0000269" key="4">
    <source>
    </source>
</evidence>
<evidence type="ECO:0000269" key="5">
    <source>
    </source>
</evidence>
<evidence type="ECO:0000303" key="6">
    <source>
    </source>
</evidence>
<evidence type="ECO:0000305" key="7"/>
<evidence type="ECO:0000305" key="8">
    <source>
    </source>
</evidence>
<evidence type="ECO:0000305" key="9">
    <source>
    </source>
</evidence>
<sequence>MSSRYSLRQTPRKKELFEGMVETPIRRSRSARRQTSQPLSDVETDSTVEILPQPTEVLPQPTRRRTARFKEELDSDTDSDNMGAVNRAANGKTNGHANGNGNGYTNGHGNGNGHATNGHATSNGAAPIQAVIEKTKGVSHDPHVVDGWRPGQDPKVDYSGEVEFGGSFGTAAMMTLFPVLMWYMWIGATYYDGKFPSRTEGQSWSEFGAHLANLVYTGAFPRLQVWAWYWSYLIVEGAFYCLLPGVWGYGKPLPHEGGKQLPYYCNAYWSLYTTLACLAGLHYSGIWPLYTAVDEFGPLLSVAILSGFLVSIVAYFSALWRGKQHRMTGYPIYDFFMGAELNPRMFGILDFKMFFEVRMPWYILLILSLGTAARQHEQYGYVSGEVWFLVMAHFLYANACAKGEELIITTWDMYYEKWGFMLIFWNLAGVPLSYCHCTIYLANHHPDVYRWNRGILAAMFVGYLFWYWVWDSCNSQKNRFRAMEKGKLVLRNTFPQVPWQTIHNPKTIVSPQGTILVDGWYGLARKIHYTADVWFAVSWGLITGFESPFPWFYPVFFCCMIAHRAARDIHRCRRKYGDAWLEYERRVPYLFIPYVI</sequence>
<organism>
    <name type="scientific">Gibberella zeae (strain ATCC MYA-4620 / CBS 123657 / FGSC 9075 / NRRL 31084 / PH-1)</name>
    <name type="common">Wheat head blight fungus</name>
    <name type="synonym">Fusarium graminearum</name>
    <dbReference type="NCBI Taxonomy" id="229533"/>
    <lineage>
        <taxon>Eukaryota</taxon>
        <taxon>Fungi</taxon>
        <taxon>Dikarya</taxon>
        <taxon>Ascomycota</taxon>
        <taxon>Pezizomycotina</taxon>
        <taxon>Sordariomycetes</taxon>
        <taxon>Hypocreomycetidae</taxon>
        <taxon>Hypocreales</taxon>
        <taxon>Nectriaceae</taxon>
        <taxon>Fusarium</taxon>
    </lineage>
</organism>
<protein>
    <recommendedName>
        <fullName evidence="6">Delta(24(24(1)))-sterol reductase</fullName>
        <ecNumber evidence="8">1.3.1.71</ecNumber>
    </recommendedName>
    <alternativeName>
        <fullName evidence="6">C-24(28) sterol reductase</fullName>
    </alternativeName>
    <alternativeName>
        <fullName evidence="6">Sterol Delta(24(28))-reductase</fullName>
    </alternativeName>
</protein>
<feature type="chain" id="PRO_0000454358" description="Delta(24(24(1)))-sterol reductase">
    <location>
        <begin position="1"/>
        <end position="596"/>
    </location>
</feature>
<feature type="transmembrane region" description="Helical" evidence="2">
    <location>
        <begin position="168"/>
        <end position="188"/>
    </location>
</feature>
<feature type="transmembrane region" description="Helical" evidence="2">
    <location>
        <begin position="225"/>
        <end position="245"/>
    </location>
</feature>
<feature type="transmembrane region" description="Helical" evidence="2">
    <location>
        <begin position="269"/>
        <end position="289"/>
    </location>
</feature>
<feature type="transmembrane region" description="Helical" evidence="2">
    <location>
        <begin position="296"/>
        <end position="316"/>
    </location>
</feature>
<feature type="transmembrane region" description="Helical" evidence="2">
    <location>
        <begin position="353"/>
        <end position="373"/>
    </location>
</feature>
<feature type="transmembrane region" description="Helical" evidence="2">
    <location>
        <begin position="381"/>
        <end position="401"/>
    </location>
</feature>
<feature type="transmembrane region" description="Helical" evidence="2">
    <location>
        <begin position="419"/>
        <end position="439"/>
    </location>
</feature>
<feature type="transmembrane region" description="Helical" evidence="2">
    <location>
        <begin position="454"/>
        <end position="474"/>
    </location>
</feature>
<feature type="transmembrane region" description="Helical" evidence="2">
    <location>
        <begin position="535"/>
        <end position="557"/>
    </location>
</feature>
<feature type="region of interest" description="Disordered" evidence="3">
    <location>
        <begin position="1"/>
        <end position="122"/>
    </location>
</feature>
<feature type="compositionally biased region" description="Gly residues" evidence="3">
    <location>
        <begin position="98"/>
        <end position="112"/>
    </location>
</feature>
<feature type="binding site" evidence="1">
    <location>
        <position position="477"/>
    </location>
    <ligand>
        <name>NADP(+)</name>
        <dbReference type="ChEBI" id="CHEBI:58349"/>
    </ligand>
</feature>
<feature type="binding site" evidence="1">
    <location>
        <position position="481"/>
    </location>
    <ligand>
        <name>NADP(+)</name>
        <dbReference type="ChEBI" id="CHEBI:58349"/>
    </ligand>
</feature>
<feature type="binding site" evidence="1">
    <location>
        <position position="516"/>
    </location>
    <ligand>
        <name>NADP(+)</name>
        <dbReference type="ChEBI" id="CHEBI:58349"/>
    </ligand>
</feature>
<feature type="binding site" evidence="1">
    <location>
        <begin position="528"/>
        <end position="529"/>
    </location>
    <ligand>
        <name>NADP(+)</name>
        <dbReference type="ChEBI" id="CHEBI:58349"/>
    </ligand>
</feature>
<feature type="binding site" evidence="1">
    <location>
        <position position="568"/>
    </location>
    <ligand>
        <name>NADP(+)</name>
        <dbReference type="ChEBI" id="CHEBI:58349"/>
    </ligand>
</feature>
<feature type="binding site" evidence="1">
    <location>
        <begin position="572"/>
        <end position="576"/>
    </location>
    <ligand>
        <name>NADP(+)</name>
        <dbReference type="ChEBI" id="CHEBI:58349"/>
    </ligand>
</feature>
<feature type="binding site" evidence="1">
    <location>
        <position position="583"/>
    </location>
    <ligand>
        <name>NADP(+)</name>
        <dbReference type="ChEBI" id="CHEBI:58349"/>
    </ligand>
</feature>
<dbReference type="EC" id="1.3.1.71" evidence="8"/>
<dbReference type="EMBL" id="HG970332">
    <property type="protein sequence ID" value="SCB64533.1"/>
    <property type="molecule type" value="Genomic_DNA"/>
</dbReference>
<dbReference type="RefSeq" id="XP_011318924.1">
    <property type="nucleotide sequence ID" value="XM_011320622.1"/>
</dbReference>
<dbReference type="SMR" id="I1RZZ3"/>
<dbReference type="FunCoup" id="I1RZZ3">
    <property type="interactions" value="109"/>
</dbReference>
<dbReference type="STRING" id="229533.I1RZZ3"/>
<dbReference type="KEGG" id="fgr:FGSG_10003"/>
<dbReference type="VEuPathDB" id="FungiDB:FGRAMPH1_01G07045"/>
<dbReference type="eggNOG" id="KOG1435">
    <property type="taxonomic scope" value="Eukaryota"/>
</dbReference>
<dbReference type="HOGENOM" id="CLU_015631_3_0_1"/>
<dbReference type="InParanoid" id="I1RZZ3"/>
<dbReference type="OrthoDB" id="53324at110618"/>
<dbReference type="UniPathway" id="UPA00768"/>
<dbReference type="PHI-base" id="PHI:2728"/>
<dbReference type="Proteomes" id="UP000070720">
    <property type="component" value="Chromosome 1"/>
</dbReference>
<dbReference type="GO" id="GO:0005789">
    <property type="term" value="C:endoplasmic reticulum membrane"/>
    <property type="evidence" value="ECO:0007669"/>
    <property type="project" value="UniProtKB-SubCell"/>
</dbReference>
<dbReference type="GO" id="GO:0000246">
    <property type="term" value="F:Delta24(24-1) sterol reductase activity"/>
    <property type="evidence" value="ECO:0007669"/>
    <property type="project" value="TreeGrafter"/>
</dbReference>
<dbReference type="GO" id="GO:0006696">
    <property type="term" value="P:ergosterol biosynthetic process"/>
    <property type="evidence" value="ECO:0007669"/>
    <property type="project" value="TreeGrafter"/>
</dbReference>
<dbReference type="FunFam" id="1.20.120.1630:FF:000003">
    <property type="entry name" value="C-24(28) sterol reductase"/>
    <property type="match status" value="1"/>
</dbReference>
<dbReference type="Gene3D" id="1.20.120.1630">
    <property type="match status" value="1"/>
</dbReference>
<dbReference type="InterPro" id="IPR001171">
    <property type="entry name" value="ERG24_DHCR-like"/>
</dbReference>
<dbReference type="InterPro" id="IPR018083">
    <property type="entry name" value="Sterol_reductase_CS"/>
</dbReference>
<dbReference type="PANTHER" id="PTHR21257">
    <property type="entry name" value="DELTA(14)-STEROL REDUCTASE"/>
    <property type="match status" value="1"/>
</dbReference>
<dbReference type="PANTHER" id="PTHR21257:SF31">
    <property type="entry name" value="DELTA(24(24(1)))-STEROL REDUCTASE ERG4"/>
    <property type="match status" value="1"/>
</dbReference>
<dbReference type="Pfam" id="PF01222">
    <property type="entry name" value="ERG4_ERG24"/>
    <property type="match status" value="1"/>
</dbReference>
<dbReference type="PROSITE" id="PS01017">
    <property type="entry name" value="STEROL_REDUCT_1"/>
    <property type="match status" value="1"/>
</dbReference>
<comment type="function">
    <text evidence="4 9">Delta(24(24(1)))-sterol reductase; part of the third module of ergosterol biosynthesis pathway that includes the late steps of the pathway (PubMed:22947191). ERG4 catalyzes the last step of ergosterol biosynthesis by converting ergosta-5,7,22,24(28)-tetraen-3beta-ol into ergosterol (PubMed:22947191). The third module or late pathway involves the ergosterol synthesis itself through consecutive reactions that mainly occur in the endoplasmic reticulum (ER) membrane. Firstly, the squalene synthase ERG9 catalyzes the condensation of 2 farnesyl pyrophosphate moieties to form squalene, which is the precursor of all steroids. Squalene synthase is crucial for balancing the incorporation of farnesyl diphosphate (FPP) into sterol and nonsterol isoprene synthesis. Secondly, squalene is converted into lanosterol by the consecutive action of the squalene epoxidase ERG1 and the lanosterol synthase ERG7. Then, the delta(24)-sterol C-methyltransferase ERG6 methylates lanosterol at C-24 to produce eburicol. Eburicol is the substrate of the sterol 14-alpha demethylase encoded by CYP51A, CYP51B and CYP51C, to yield 4,4,24-trimethyl ergosta-8,14,24(28)-trienol. CYP51B encodes the enzyme primarily responsible for sterol 14-alpha-demethylation, and plays an essential role in ascospore formation. CYP51A encodes an additional sterol 14-alpha-demethylase, induced on ergosterol depletion and responsible for the intrinsic variation in azole sensitivity. The third CYP51 isoform, CYP51C, does not encode a sterol 14-alpha-demethylase, but is required for full virulence on host wheat ears. The C-14 reductase ERG24 then reduces the C14=C15 double bond which leads to 4,4-dimethylfecosterol. A sequence of further demethylations at C-4, involving the C-4 demethylation complex containing the C-4 methylsterol oxidases ERG25, the sterol-4-alpha-carboxylate 3-dehydrogenase ERG26 and the 3-keto-steroid reductase ERG27, leads to the production of fecosterol via 4-methylfecosterol. ERG28 has a role as a scaffold to help anchor ERG25, ERG26 and ERG27 to the endoplasmic reticulum. The C-8 sterol isomerase ERG2 then catalyzes the reaction which results in unsaturation at C-7 in the B ring of sterols and thus converts fecosterol to episterol. The sterol-C5-desaturases ERG3A and ERG3BB then catalyze the introduction of a C-5 double bond in the B ring to produce 5-dehydroepisterol. The C-22 sterol desaturases ERG5A and ERG5B further convert 5-dehydroepisterol into ergosta-5,7,22,24(28)-tetraen-3beta-ol by forming the C-22(23) double bond in the sterol side chain. Finally, ergosta-5,7,22,24(28)-tetraen-3beta-ol is substrate of the C-24(28) sterol reductase ERG4 to produce ergosterol (Probable).</text>
</comment>
<comment type="catalytic activity">
    <reaction evidence="8">
        <text>ergosterol + NADP(+) = ergosta-5,7,22,24(28)-tetraen-3beta-ol + NADPH + H(+)</text>
        <dbReference type="Rhea" id="RHEA:18501"/>
        <dbReference type="ChEBI" id="CHEBI:15378"/>
        <dbReference type="ChEBI" id="CHEBI:16933"/>
        <dbReference type="ChEBI" id="CHEBI:18249"/>
        <dbReference type="ChEBI" id="CHEBI:57783"/>
        <dbReference type="ChEBI" id="CHEBI:58349"/>
        <dbReference type="EC" id="1.3.1.71"/>
    </reaction>
    <physiologicalReaction direction="right-to-left" evidence="8">
        <dbReference type="Rhea" id="RHEA:18503"/>
    </physiologicalReaction>
</comment>
<comment type="pathway">
    <text evidence="8">Steroid metabolism; ergosterol biosynthesis.</text>
</comment>
<comment type="subcellular location">
    <subcellularLocation>
        <location evidence="7">Endoplasmic reticulum membrane</location>
        <topology evidence="2">Multi-pass membrane protein</topology>
    </subcellularLocation>
</comment>
<comment type="disruption phenotype">
    <text evidence="4">Abolishes the production of ergosterol and leads to the accumulation of sterol intermediates (PubMed:22947191). Leads to reduced deoxynivalenol (DON) production (PubMed:22947191). Results in reduced mycelial growth as well as less conidia (PubMed:22947191). Leads to decreased virulence (PubMed:22947191). Exhibits a significantly increased sensitivity to the divalent cations Cu(2+), Mg(2+) and Ca(2+), as well as to the trivalent cations Fe(3+) and Al(3+) (PubMed:22947191). Shows increased resistance to cell wall-degrading enzymes and significantly increases sensitivity to osmotic stress mediated by NaCl and D-sorbitol, and to oxidative stress generated by H(2)O(2) and paraquat (PubMed:22947191). Decreases tolerance to sterol biosynthesis inhibitors, including triadimefon and tebuconazole (targeting sterol 14-alpha-demethylase), the amine fungicides tridemorph, fenpropidin and spiroxamine (targeting sterol C-14 reductase or sterol delta-7,8-isomerase) and the polyene fungicides nystatin and amphotericin B (binding to ergosterol) (PubMed:22947191). Does not affect the sensitivity to the dicarboximide fungicide iprodione (PubMed:22947191). Finally, ERG4 deletion leads to increased expression of the ergosterol biosynthesis genes CYP51A, CYP51B, CYP51C, ERG2, ERG6A, ERG6B, ERG7, ERG24A and ERG24B (PubMed:22947191).</text>
</comment>
<comment type="miscellaneous">
    <text evidence="5">In Fusarium, the biosynthesis pathway of the sterol precursors leading to the prevalent sterol ergosterol differs from yeast. The ringsystem of lanosterol in S.cerevisiae is firstly demethylised in three enzymatic steps leading to the intermediate zymosterol and secondly a methyl group is added to zymosterol by the sterol 24-C-methyltransferase to form fecosterol. In Fusarium, lanosterol is firstly transmethylated by the sterol 24-C-methyltransferase leading to the intermediate eburicol and secondly demethylated in three steps to form fecosterol.</text>
</comment>
<comment type="similarity">
    <text evidence="7">Belongs to the ERG4/ERG24 family.</text>
</comment>
<proteinExistence type="inferred from homology"/>
<name>ERG4_GIBZE</name>
<reference key="1">
    <citation type="journal article" date="2007" name="Science">
        <title>The Fusarium graminearum genome reveals a link between localized polymorphism and pathogen specialization.</title>
        <authorList>
            <person name="Cuomo C.A."/>
            <person name="Gueldener U."/>
            <person name="Xu J.-R."/>
            <person name="Trail F."/>
            <person name="Turgeon B.G."/>
            <person name="Di Pietro A."/>
            <person name="Walton J.D."/>
            <person name="Ma L.-J."/>
            <person name="Baker S.E."/>
            <person name="Rep M."/>
            <person name="Adam G."/>
            <person name="Antoniw J."/>
            <person name="Baldwin T."/>
            <person name="Calvo S.E."/>
            <person name="Chang Y.-L."/>
            <person name="DeCaprio D."/>
            <person name="Gale L.R."/>
            <person name="Gnerre S."/>
            <person name="Goswami R.S."/>
            <person name="Hammond-Kosack K."/>
            <person name="Harris L.J."/>
            <person name="Hilburn K."/>
            <person name="Kennell J.C."/>
            <person name="Kroken S."/>
            <person name="Magnuson J.K."/>
            <person name="Mannhaupt G."/>
            <person name="Mauceli E.W."/>
            <person name="Mewes H.-W."/>
            <person name="Mitterbauer R."/>
            <person name="Muehlbauer G."/>
            <person name="Muensterkoetter M."/>
            <person name="Nelson D."/>
            <person name="O'Donnell K."/>
            <person name="Ouellet T."/>
            <person name="Qi W."/>
            <person name="Quesneville H."/>
            <person name="Roncero M.I.G."/>
            <person name="Seong K.-Y."/>
            <person name="Tetko I.V."/>
            <person name="Urban M."/>
            <person name="Waalwijk C."/>
            <person name="Ward T.J."/>
            <person name="Yao J."/>
            <person name="Birren B.W."/>
            <person name="Kistler H.C."/>
        </authorList>
    </citation>
    <scope>NUCLEOTIDE SEQUENCE [LARGE SCALE GENOMIC DNA]</scope>
    <source>
        <strain>ATCC MYA-4620 / CBS 123657 / FGSC 9075 / NRRL 31084 / PH-1</strain>
    </source>
</reference>
<reference key="2">
    <citation type="journal article" date="2010" name="Nature">
        <title>Comparative genomics reveals mobile pathogenicity chromosomes in Fusarium.</title>
        <authorList>
            <person name="Ma L.-J."/>
            <person name="van der Does H.C."/>
            <person name="Borkovich K.A."/>
            <person name="Coleman J.J."/>
            <person name="Daboussi M.-J."/>
            <person name="Di Pietro A."/>
            <person name="Dufresne M."/>
            <person name="Freitag M."/>
            <person name="Grabherr M."/>
            <person name="Henrissat B."/>
            <person name="Houterman P.M."/>
            <person name="Kang S."/>
            <person name="Shim W.-B."/>
            <person name="Woloshuk C."/>
            <person name="Xie X."/>
            <person name="Xu J.-R."/>
            <person name="Antoniw J."/>
            <person name="Baker S.E."/>
            <person name="Bluhm B.H."/>
            <person name="Breakspear A."/>
            <person name="Brown D.W."/>
            <person name="Butchko R.A.E."/>
            <person name="Chapman S."/>
            <person name="Coulson R."/>
            <person name="Coutinho P.M."/>
            <person name="Danchin E.G.J."/>
            <person name="Diener A."/>
            <person name="Gale L.R."/>
            <person name="Gardiner D.M."/>
            <person name="Goff S."/>
            <person name="Hammond-Kosack K.E."/>
            <person name="Hilburn K."/>
            <person name="Hua-Van A."/>
            <person name="Jonkers W."/>
            <person name="Kazan K."/>
            <person name="Kodira C.D."/>
            <person name="Koehrsen M."/>
            <person name="Kumar L."/>
            <person name="Lee Y.-H."/>
            <person name="Li L."/>
            <person name="Manners J.M."/>
            <person name="Miranda-Saavedra D."/>
            <person name="Mukherjee M."/>
            <person name="Park G."/>
            <person name="Park J."/>
            <person name="Park S.-Y."/>
            <person name="Proctor R.H."/>
            <person name="Regev A."/>
            <person name="Ruiz-Roldan M.C."/>
            <person name="Sain D."/>
            <person name="Sakthikumar S."/>
            <person name="Sykes S."/>
            <person name="Schwartz D.C."/>
            <person name="Turgeon B.G."/>
            <person name="Wapinski I."/>
            <person name="Yoder O."/>
            <person name="Young S."/>
            <person name="Zeng Q."/>
            <person name="Zhou S."/>
            <person name="Galagan J."/>
            <person name="Cuomo C.A."/>
            <person name="Kistler H.C."/>
            <person name="Rep M."/>
        </authorList>
    </citation>
    <scope>GENOME REANNOTATION</scope>
    <source>
        <strain>ATCC MYA-4620 / CBS 123657 / FGSC 9075 / NRRL 31084 / PH-1</strain>
    </source>
</reference>
<reference key="3">
    <citation type="journal article" date="2015" name="BMC Genomics">
        <title>The completed genome sequence of the pathogenic ascomycete fungus Fusarium graminearum.</title>
        <authorList>
            <person name="King R."/>
            <person name="Urban M."/>
            <person name="Hammond-Kosack M.C.U."/>
            <person name="Hassani-Pak K."/>
            <person name="Hammond-Kosack K.E."/>
        </authorList>
    </citation>
    <scope>NUCLEOTIDE SEQUENCE [LARGE SCALE GENOMIC DNA]</scope>
    <source>
        <strain>ATCC MYA-4620 / CBS 123657 / FGSC 9075 / NRRL 31084 / PH-1</strain>
    </source>
</reference>
<reference key="4">
    <citation type="journal article" date="2013" name="Mol. Plant Pathol.">
        <title>Involvement of FgERG4 in ergosterol biosynthesis, vegetative differentiation and virulence in Fusarium graminearum.</title>
        <authorList>
            <person name="Liu X."/>
            <person name="Jiang J."/>
            <person name="Yin Y."/>
            <person name="Ma Z."/>
        </authorList>
    </citation>
    <scope>FUNCTION</scope>
    <scope>DISRUPTION PHENOTYPE</scope>
</reference>
<reference key="5">
    <citation type="journal article" date="2013" name="New Phytol.">
        <title>Characterization of the sterol 14alpha-demethylases of Fusarium graminearum identifies a novel genus-specific CYP51 function.</title>
        <authorList>
            <person name="Fan J."/>
            <person name="Urban M."/>
            <person name="Parker J.E."/>
            <person name="Brewer H.C."/>
            <person name="Kelly S.L."/>
            <person name="Hammond-Kosack K.E."/>
            <person name="Fraaije B.A."/>
            <person name="Liu X."/>
            <person name="Cools H.J."/>
        </authorList>
    </citation>
    <scope>FUNCTION</scope>
    <scope>PATHWAY</scope>
</reference>
<keyword id="KW-0256">Endoplasmic reticulum</keyword>
<keyword id="KW-0444">Lipid biosynthesis</keyword>
<keyword id="KW-0443">Lipid metabolism</keyword>
<keyword id="KW-0472">Membrane</keyword>
<keyword id="KW-0521">NADP</keyword>
<keyword id="KW-0560">Oxidoreductase</keyword>
<keyword id="KW-1185">Reference proteome</keyword>
<keyword id="KW-0752">Steroid biosynthesis</keyword>
<keyword id="KW-0753">Steroid metabolism</keyword>
<keyword id="KW-0756">Sterol biosynthesis</keyword>
<keyword id="KW-1207">Sterol metabolism</keyword>
<keyword id="KW-0812">Transmembrane</keyword>
<keyword id="KW-1133">Transmembrane helix</keyword>
<keyword id="KW-0843">Virulence</keyword>